<organism>
    <name type="scientific">Pseudomonas putida (strain GB-1)</name>
    <dbReference type="NCBI Taxonomy" id="76869"/>
    <lineage>
        <taxon>Bacteria</taxon>
        <taxon>Pseudomonadati</taxon>
        <taxon>Pseudomonadota</taxon>
        <taxon>Gammaproteobacteria</taxon>
        <taxon>Pseudomonadales</taxon>
        <taxon>Pseudomonadaceae</taxon>
        <taxon>Pseudomonas</taxon>
    </lineage>
</organism>
<keyword id="KW-0050">Antiport</keyword>
<keyword id="KW-0997">Cell inner membrane</keyword>
<keyword id="KW-1003">Cell membrane</keyword>
<keyword id="KW-0406">Ion transport</keyword>
<keyword id="KW-0472">Membrane</keyword>
<keyword id="KW-0630">Potassium</keyword>
<keyword id="KW-0633">Potassium transport</keyword>
<keyword id="KW-0812">Transmembrane</keyword>
<keyword id="KW-1133">Transmembrane helix</keyword>
<keyword id="KW-0813">Transport</keyword>
<dbReference type="EMBL" id="CP000926">
    <property type="protein sequence ID" value="ABZ01001.1"/>
    <property type="molecule type" value="Genomic_DNA"/>
</dbReference>
<dbReference type="RefSeq" id="WP_012274619.1">
    <property type="nucleotide sequence ID" value="NC_010322.1"/>
</dbReference>
<dbReference type="SMR" id="B0KN20"/>
<dbReference type="KEGG" id="ppg:PputGB1_5116"/>
<dbReference type="eggNOG" id="COG3263">
    <property type="taxonomic scope" value="Bacteria"/>
</dbReference>
<dbReference type="HOGENOM" id="CLU_005912_9_2_6"/>
<dbReference type="Proteomes" id="UP000002157">
    <property type="component" value="Chromosome"/>
</dbReference>
<dbReference type="GO" id="GO:0005886">
    <property type="term" value="C:plasma membrane"/>
    <property type="evidence" value="ECO:0007669"/>
    <property type="project" value="UniProtKB-SubCell"/>
</dbReference>
<dbReference type="GO" id="GO:0050660">
    <property type="term" value="F:flavin adenine dinucleotide binding"/>
    <property type="evidence" value="ECO:0007669"/>
    <property type="project" value="InterPro"/>
</dbReference>
<dbReference type="GO" id="GO:0015386">
    <property type="term" value="F:potassium:proton antiporter activity"/>
    <property type="evidence" value="ECO:0007669"/>
    <property type="project" value="UniProtKB-UniRule"/>
</dbReference>
<dbReference type="GO" id="GO:0006884">
    <property type="term" value="P:cell volume homeostasis"/>
    <property type="evidence" value="ECO:0007669"/>
    <property type="project" value="InterPro"/>
</dbReference>
<dbReference type="Gene3D" id="1.20.1530.20">
    <property type="match status" value="1"/>
</dbReference>
<dbReference type="Gene3D" id="3.30.465.10">
    <property type="match status" value="1"/>
</dbReference>
<dbReference type="Gene3D" id="3.30.70.1450">
    <property type="entry name" value="Regulator of K+ conductance, C-terminal domain"/>
    <property type="match status" value="1"/>
</dbReference>
<dbReference type="HAMAP" id="MF_01075">
    <property type="entry name" value="NhaP2"/>
    <property type="match status" value="1"/>
</dbReference>
<dbReference type="InterPro" id="IPR006153">
    <property type="entry name" value="Cation/H_exchanger_TM"/>
</dbReference>
<dbReference type="InterPro" id="IPR036318">
    <property type="entry name" value="FAD-bd_PCMH-like_sf"/>
</dbReference>
<dbReference type="InterPro" id="IPR016169">
    <property type="entry name" value="FAD-bd_PCMH_sub2"/>
</dbReference>
<dbReference type="InterPro" id="IPR038770">
    <property type="entry name" value="Na+/solute_symporter_sf"/>
</dbReference>
<dbReference type="InterPro" id="IPR023729">
    <property type="entry name" value="NhaP2"/>
</dbReference>
<dbReference type="InterPro" id="IPR006037">
    <property type="entry name" value="RCK_C"/>
</dbReference>
<dbReference type="InterPro" id="IPR036721">
    <property type="entry name" value="RCK_C_sf"/>
</dbReference>
<dbReference type="InterPro" id="IPR005170">
    <property type="entry name" value="Transptr-assoc_dom"/>
</dbReference>
<dbReference type="NCBIfam" id="NF003714">
    <property type="entry name" value="PRK05326.1-1"/>
    <property type="match status" value="1"/>
</dbReference>
<dbReference type="NCBIfam" id="NF003715">
    <property type="entry name" value="PRK05326.1-2"/>
    <property type="match status" value="1"/>
</dbReference>
<dbReference type="NCBIfam" id="NF003716">
    <property type="entry name" value="PRK05326.1-3"/>
    <property type="match status" value="1"/>
</dbReference>
<dbReference type="PANTHER" id="PTHR32507:SF7">
    <property type="entry name" value="K(+)_H(+) ANTIPORTER NHAP2"/>
    <property type="match status" value="1"/>
</dbReference>
<dbReference type="PANTHER" id="PTHR32507">
    <property type="entry name" value="NA(+)/H(+) ANTIPORTER 1"/>
    <property type="match status" value="1"/>
</dbReference>
<dbReference type="Pfam" id="PF03471">
    <property type="entry name" value="CorC_HlyC"/>
    <property type="match status" value="1"/>
</dbReference>
<dbReference type="Pfam" id="PF00999">
    <property type="entry name" value="Na_H_Exchanger"/>
    <property type="match status" value="1"/>
</dbReference>
<dbReference type="Pfam" id="PF02080">
    <property type="entry name" value="TrkA_C"/>
    <property type="match status" value="1"/>
</dbReference>
<dbReference type="SMART" id="SM01091">
    <property type="entry name" value="CorC_HlyC"/>
    <property type="match status" value="1"/>
</dbReference>
<dbReference type="SUPFAM" id="SSF56176">
    <property type="entry name" value="FAD-binding/transporter-associated domain-like"/>
    <property type="match status" value="1"/>
</dbReference>
<dbReference type="SUPFAM" id="SSF116726">
    <property type="entry name" value="TrkA C-terminal domain-like"/>
    <property type="match status" value="1"/>
</dbReference>
<dbReference type="PROSITE" id="PS51202">
    <property type="entry name" value="RCK_C"/>
    <property type="match status" value="1"/>
</dbReference>
<protein>
    <recommendedName>
        <fullName evidence="1">K(+)/H(+) antiporter NhaP2</fullName>
    </recommendedName>
    <alternativeName>
        <fullName evidence="1">Potassium/proton antiporter NhaP2</fullName>
    </alternativeName>
</protein>
<comment type="function">
    <text evidence="1">K(+)/H(+) antiporter that extrudes potassium in exchange for external protons and maintains the internal concentration of potassium under toxic levels.</text>
</comment>
<comment type="catalytic activity">
    <reaction evidence="1">
        <text>K(+)(in) + H(+)(out) = K(+)(out) + H(+)(in)</text>
        <dbReference type="Rhea" id="RHEA:29467"/>
        <dbReference type="ChEBI" id="CHEBI:15378"/>
        <dbReference type="ChEBI" id="CHEBI:29103"/>
    </reaction>
    <physiologicalReaction direction="left-to-right" evidence="1">
        <dbReference type="Rhea" id="RHEA:29468"/>
    </physiologicalReaction>
</comment>
<comment type="subcellular location">
    <subcellularLocation>
        <location evidence="1">Cell inner membrane</location>
        <topology evidence="1">Multi-pass membrane protein</topology>
    </subcellularLocation>
</comment>
<comment type="similarity">
    <text evidence="1">Belongs to the monovalent cation:proton antiporter 1 (CPA1) transporter (TC 2.A.36) family. NhaP2 subfamily.</text>
</comment>
<sequence length="580" mass="61317">MDASTINSLFLIGALLVGASILVSSLSSRLGIPILVIILAVGMVAGVDGGGIIFNNYPTAYLVGNLALAVILLDGGLRTRVASFRVALWPALSLATVGVMITTALTGLVAAWLFNLSLIQGLLIGAIVGSTDAAAVFSLLGGKGLNERVTATLEIESGSNDPMAVFLTVTLIDMIASGQTGLHWSLLGHLLREFGIGGLLGLGGGWLMLQLVNRINLAGGLYPILVVAGGLVVFSLTNALHGSGFLAVYLCGLVLGNKPIRSRHGILHMLDGMAWLAQIGMFLVLGLLVTPHDLLPIALPALGLALWMILVARPLSVVAALLPFKAFHGREKGFISWVGLRGAVPIILAVFPLMAGLPDAQLFFNLAFFIVLVSLLVQGTSLPWMAKLLKVTVPPDPAPISRSALEVHVTSEWELFVYRLGAEKWCIGAALRELKMPEGTRIAALFRNEQLLHPSGSTVLEVGDMLCVIGHEHNLPALGKLFSQAPQRGLDLRFFGDFVLEGDAELGAVAALYGLKLDGLDAKMPLAQFIRQKVGGAPVVGDQVEWHGTIWTVATMDGNKIQKVGVRFPEGTRPGPGLFL</sequence>
<evidence type="ECO:0000255" key="1">
    <source>
        <dbReference type="HAMAP-Rule" id="MF_01075"/>
    </source>
</evidence>
<reference key="1">
    <citation type="submission" date="2008-01" db="EMBL/GenBank/DDBJ databases">
        <title>Complete sequence of Pseudomonas putida GB-1.</title>
        <authorList>
            <consortium name="US DOE Joint Genome Institute"/>
            <person name="Copeland A."/>
            <person name="Lucas S."/>
            <person name="Lapidus A."/>
            <person name="Barry K."/>
            <person name="Glavina del Rio T."/>
            <person name="Dalin E."/>
            <person name="Tice H."/>
            <person name="Pitluck S."/>
            <person name="Bruce D."/>
            <person name="Goodwin L."/>
            <person name="Chertkov O."/>
            <person name="Brettin T."/>
            <person name="Detter J.C."/>
            <person name="Han C."/>
            <person name="Kuske C.R."/>
            <person name="Schmutz J."/>
            <person name="Larimer F."/>
            <person name="Land M."/>
            <person name="Hauser L."/>
            <person name="Kyrpides N."/>
            <person name="Kim E."/>
            <person name="McCarthy J.K."/>
            <person name="Richardson P."/>
        </authorList>
    </citation>
    <scope>NUCLEOTIDE SEQUENCE [LARGE SCALE GENOMIC DNA]</scope>
    <source>
        <strain>GB-1</strain>
    </source>
</reference>
<feature type="chain" id="PRO_1000084512" description="K(+)/H(+) antiporter NhaP2">
    <location>
        <begin position="1"/>
        <end position="580"/>
    </location>
</feature>
<feature type="transmembrane region" description="Helical" evidence="1">
    <location>
        <begin position="6"/>
        <end position="26"/>
    </location>
</feature>
<feature type="transmembrane region" description="Helical" evidence="1">
    <location>
        <begin position="34"/>
        <end position="54"/>
    </location>
</feature>
<feature type="transmembrane region" description="Helical" evidence="1">
    <location>
        <begin position="57"/>
        <end position="77"/>
    </location>
</feature>
<feature type="transmembrane region" description="Helical" evidence="1">
    <location>
        <begin position="86"/>
        <end position="106"/>
    </location>
</feature>
<feature type="transmembrane region" description="Helical" evidence="1">
    <location>
        <begin position="108"/>
        <end position="128"/>
    </location>
</feature>
<feature type="transmembrane region" description="Helical" evidence="1">
    <location>
        <begin position="162"/>
        <end position="182"/>
    </location>
</feature>
<feature type="transmembrane region" description="Helical" evidence="1">
    <location>
        <begin position="193"/>
        <end position="213"/>
    </location>
</feature>
<feature type="transmembrane region" description="Helical" evidence="1">
    <location>
        <begin position="217"/>
        <end position="237"/>
    </location>
</feature>
<feature type="transmembrane region" description="Helical" evidence="1">
    <location>
        <begin position="240"/>
        <end position="260"/>
    </location>
</feature>
<feature type="transmembrane region" description="Helical" evidence="1">
    <location>
        <begin position="269"/>
        <end position="289"/>
    </location>
</feature>
<feature type="transmembrane region" description="Helical" evidence="1">
    <location>
        <begin position="292"/>
        <end position="312"/>
    </location>
</feature>
<feature type="transmembrane region" description="Helical" evidence="1">
    <location>
        <begin position="334"/>
        <end position="354"/>
    </location>
</feature>
<feature type="transmembrane region" description="Helical" evidence="1">
    <location>
        <begin position="362"/>
        <end position="382"/>
    </location>
</feature>
<feature type="domain" description="RCK C-terminal" evidence="1">
    <location>
        <begin position="402"/>
        <end position="484"/>
    </location>
</feature>
<gene>
    <name evidence="1" type="primary">nhaP2</name>
    <name type="synonym">cvrA</name>
    <name type="ordered locus">PputGB1_5116</name>
</gene>
<accession>B0KN20</accession>
<name>NHAP2_PSEPG</name>
<proteinExistence type="inferred from homology"/>